<comment type="function">
    <text evidence="1">Transfers a GMP moiety from GTP to Mo-molybdopterin (Mo-MPT) cofactor (Moco or molybdenum cofactor) to form Mo-molybdopterin guanine dinucleotide (Mo-MGD) cofactor.</text>
</comment>
<comment type="catalytic activity">
    <reaction evidence="1">
        <text>Mo-molybdopterin + GTP + H(+) = Mo-molybdopterin guanine dinucleotide + diphosphate</text>
        <dbReference type="Rhea" id="RHEA:34243"/>
        <dbReference type="ChEBI" id="CHEBI:15378"/>
        <dbReference type="ChEBI" id="CHEBI:33019"/>
        <dbReference type="ChEBI" id="CHEBI:37565"/>
        <dbReference type="ChEBI" id="CHEBI:71302"/>
        <dbReference type="ChEBI" id="CHEBI:71310"/>
        <dbReference type="EC" id="2.7.7.77"/>
    </reaction>
</comment>
<comment type="cofactor">
    <cofactor evidence="1">
        <name>Mg(2+)</name>
        <dbReference type="ChEBI" id="CHEBI:18420"/>
    </cofactor>
</comment>
<comment type="subunit">
    <text evidence="1">Monomer.</text>
</comment>
<comment type="subcellular location">
    <subcellularLocation>
        <location evidence="1">Cytoplasm</location>
    </subcellularLocation>
</comment>
<comment type="domain">
    <text evidence="1">The N-terminal domain determines nucleotide recognition and specific binding, while the C-terminal domain determines the specific binding to the target protein.</text>
</comment>
<comment type="similarity">
    <text evidence="1">Belongs to the MobA family.</text>
</comment>
<comment type="sequence caution" evidence="2">
    <conflict type="erroneous initiation">
        <sequence resource="EMBL-CDS" id="BAC59760"/>
    </conflict>
</comment>
<reference key="1">
    <citation type="journal article" date="2003" name="Lancet">
        <title>Genome sequence of Vibrio parahaemolyticus: a pathogenic mechanism distinct from that of V. cholerae.</title>
        <authorList>
            <person name="Makino K."/>
            <person name="Oshima K."/>
            <person name="Kurokawa K."/>
            <person name="Yokoyama K."/>
            <person name="Uda T."/>
            <person name="Tagomori K."/>
            <person name="Iijima Y."/>
            <person name="Najima M."/>
            <person name="Nakano M."/>
            <person name="Yamashita A."/>
            <person name="Kubota Y."/>
            <person name="Kimura S."/>
            <person name="Yasunaga T."/>
            <person name="Honda T."/>
            <person name="Shinagawa H."/>
            <person name="Hattori M."/>
            <person name="Iida T."/>
        </authorList>
    </citation>
    <scope>NUCLEOTIDE SEQUENCE [LARGE SCALE GENOMIC DNA]</scope>
    <source>
        <strain>RIMD 2210633</strain>
    </source>
</reference>
<dbReference type="EC" id="2.7.7.77" evidence="1"/>
<dbReference type="EMBL" id="BA000031">
    <property type="protein sequence ID" value="BAC59760.1"/>
    <property type="status" value="ALT_INIT"/>
    <property type="molecule type" value="Genomic_DNA"/>
</dbReference>
<dbReference type="RefSeq" id="NP_797876.1">
    <property type="nucleotide sequence ID" value="NC_004603.1"/>
</dbReference>
<dbReference type="RefSeq" id="WP_005453897.1">
    <property type="nucleotide sequence ID" value="NC_004603.1"/>
</dbReference>
<dbReference type="SMR" id="Q87PK5"/>
<dbReference type="GeneID" id="45027715"/>
<dbReference type="KEGG" id="vpa:VP1497"/>
<dbReference type="PATRIC" id="fig|223926.6.peg.1430"/>
<dbReference type="eggNOG" id="COG0746">
    <property type="taxonomic scope" value="Bacteria"/>
</dbReference>
<dbReference type="HOGENOM" id="CLU_055597_5_1_6"/>
<dbReference type="Proteomes" id="UP000002493">
    <property type="component" value="Chromosome 1"/>
</dbReference>
<dbReference type="GO" id="GO:0005737">
    <property type="term" value="C:cytoplasm"/>
    <property type="evidence" value="ECO:0007669"/>
    <property type="project" value="UniProtKB-SubCell"/>
</dbReference>
<dbReference type="GO" id="GO:0005525">
    <property type="term" value="F:GTP binding"/>
    <property type="evidence" value="ECO:0007669"/>
    <property type="project" value="UniProtKB-UniRule"/>
</dbReference>
<dbReference type="GO" id="GO:0046872">
    <property type="term" value="F:metal ion binding"/>
    <property type="evidence" value="ECO:0007669"/>
    <property type="project" value="UniProtKB-KW"/>
</dbReference>
<dbReference type="GO" id="GO:0061603">
    <property type="term" value="F:molybdenum cofactor guanylyltransferase activity"/>
    <property type="evidence" value="ECO:0007669"/>
    <property type="project" value="UniProtKB-EC"/>
</dbReference>
<dbReference type="GO" id="GO:1902758">
    <property type="term" value="P:bis(molybdopterin guanine dinucleotide)molybdenum biosynthetic process"/>
    <property type="evidence" value="ECO:0007669"/>
    <property type="project" value="TreeGrafter"/>
</dbReference>
<dbReference type="CDD" id="cd02503">
    <property type="entry name" value="MobA"/>
    <property type="match status" value="1"/>
</dbReference>
<dbReference type="Gene3D" id="3.90.550.10">
    <property type="entry name" value="Spore Coat Polysaccharide Biosynthesis Protein SpsA, Chain A"/>
    <property type="match status" value="1"/>
</dbReference>
<dbReference type="HAMAP" id="MF_00316">
    <property type="entry name" value="MobA"/>
    <property type="match status" value="1"/>
</dbReference>
<dbReference type="InterPro" id="IPR025877">
    <property type="entry name" value="MobA-like_NTP_Trfase"/>
</dbReference>
<dbReference type="InterPro" id="IPR013482">
    <property type="entry name" value="Molybde_CF_guanTrfase"/>
</dbReference>
<dbReference type="InterPro" id="IPR029044">
    <property type="entry name" value="Nucleotide-diphossugar_trans"/>
</dbReference>
<dbReference type="NCBIfam" id="TIGR02665">
    <property type="entry name" value="molyb_mobA"/>
    <property type="match status" value="1"/>
</dbReference>
<dbReference type="PANTHER" id="PTHR19136">
    <property type="entry name" value="MOLYBDENUM COFACTOR GUANYLYLTRANSFERASE"/>
    <property type="match status" value="1"/>
</dbReference>
<dbReference type="PANTHER" id="PTHR19136:SF81">
    <property type="entry name" value="MOLYBDENUM COFACTOR GUANYLYLTRANSFERASE"/>
    <property type="match status" value="1"/>
</dbReference>
<dbReference type="Pfam" id="PF12804">
    <property type="entry name" value="NTP_transf_3"/>
    <property type="match status" value="1"/>
</dbReference>
<dbReference type="SUPFAM" id="SSF53448">
    <property type="entry name" value="Nucleotide-diphospho-sugar transferases"/>
    <property type="match status" value="1"/>
</dbReference>
<feature type="chain" id="PRO_0000134922" description="Molybdenum cofactor guanylyltransferase">
    <location>
        <begin position="1"/>
        <end position="195"/>
    </location>
</feature>
<feature type="binding site" evidence="1">
    <location>
        <begin position="12"/>
        <end position="14"/>
    </location>
    <ligand>
        <name>GTP</name>
        <dbReference type="ChEBI" id="CHEBI:37565"/>
    </ligand>
</feature>
<feature type="binding site" evidence="1">
    <location>
        <position position="25"/>
    </location>
    <ligand>
        <name>GTP</name>
        <dbReference type="ChEBI" id="CHEBI:37565"/>
    </ligand>
</feature>
<feature type="binding site" evidence="1">
    <location>
        <position position="53"/>
    </location>
    <ligand>
        <name>GTP</name>
        <dbReference type="ChEBI" id="CHEBI:37565"/>
    </ligand>
</feature>
<feature type="binding site" evidence="1">
    <location>
        <position position="70"/>
    </location>
    <ligand>
        <name>GTP</name>
        <dbReference type="ChEBI" id="CHEBI:37565"/>
    </ligand>
</feature>
<feature type="binding site" evidence="1">
    <location>
        <position position="100"/>
    </location>
    <ligand>
        <name>GTP</name>
        <dbReference type="ChEBI" id="CHEBI:37565"/>
    </ligand>
</feature>
<feature type="binding site" evidence="1">
    <location>
        <position position="100"/>
    </location>
    <ligand>
        <name>Mg(2+)</name>
        <dbReference type="ChEBI" id="CHEBI:18420"/>
    </ligand>
</feature>
<accession>Q87PK5</accession>
<protein>
    <recommendedName>
        <fullName evidence="1">Molybdenum cofactor guanylyltransferase</fullName>
        <shortName evidence="1">MoCo guanylyltransferase</shortName>
        <ecNumber evidence="1">2.7.7.77</ecNumber>
    </recommendedName>
    <alternativeName>
        <fullName evidence="1">GTP:molybdopterin guanylyltransferase</fullName>
    </alternativeName>
    <alternativeName>
        <fullName evidence="1">Mo-MPT guanylyltransferase</fullName>
    </alternativeName>
    <alternativeName>
        <fullName evidence="1">Molybdopterin guanylyltransferase</fullName>
    </alternativeName>
    <alternativeName>
        <fullName evidence="1">Molybdopterin-guanine dinucleotide synthase</fullName>
        <shortName evidence="1">MGD synthase</shortName>
    </alternativeName>
</protein>
<name>MOBA_VIBPA</name>
<evidence type="ECO:0000255" key="1">
    <source>
        <dbReference type="HAMAP-Rule" id="MF_00316"/>
    </source>
</evidence>
<evidence type="ECO:0000305" key="2"/>
<proteinExistence type="inferred from homology"/>
<organism>
    <name type="scientific">Vibrio parahaemolyticus serotype O3:K6 (strain RIMD 2210633)</name>
    <dbReference type="NCBI Taxonomy" id="223926"/>
    <lineage>
        <taxon>Bacteria</taxon>
        <taxon>Pseudomonadati</taxon>
        <taxon>Pseudomonadota</taxon>
        <taxon>Gammaproteobacteria</taxon>
        <taxon>Vibrionales</taxon>
        <taxon>Vibrionaceae</taxon>
        <taxon>Vibrio</taxon>
    </lineage>
</organism>
<gene>
    <name evidence="1" type="primary">mobA</name>
    <name type="ordered locus">VP1497</name>
</gene>
<sequence length="195" mass="21952">MLQPTQTSWVILAGGQASRMGGKDKGLIELNQKPLIEHVIERLSPQTPRILINANRNQDAYSKFGFVFSDQFKDFPGPMGGIHAGLMHAETDWVGFVPCDSPQINTDLVERFCQAVKEDSDILVAHDGDHQQPVFTLYHKRVLPKLTAFLERGDRKIILLYKECNTSYVDFSDSPNCFVNLNTPEELAQFGQLES</sequence>
<keyword id="KW-0963">Cytoplasm</keyword>
<keyword id="KW-0342">GTP-binding</keyword>
<keyword id="KW-0460">Magnesium</keyword>
<keyword id="KW-0479">Metal-binding</keyword>
<keyword id="KW-0501">Molybdenum cofactor biosynthesis</keyword>
<keyword id="KW-0547">Nucleotide-binding</keyword>
<keyword id="KW-0808">Transferase</keyword>